<organism>
    <name type="scientific">Chlorobaculum tepidum (strain ATCC 49652 / DSM 12025 / NBRC 103806 / TLS)</name>
    <name type="common">Chlorobium tepidum</name>
    <dbReference type="NCBI Taxonomy" id="194439"/>
    <lineage>
        <taxon>Bacteria</taxon>
        <taxon>Pseudomonadati</taxon>
        <taxon>Chlorobiota</taxon>
        <taxon>Chlorobiia</taxon>
        <taxon>Chlorobiales</taxon>
        <taxon>Chlorobiaceae</taxon>
        <taxon>Chlorobaculum</taxon>
    </lineage>
</organism>
<sequence length="629" mass="71037">MSSNPTSSVREFEYKAEMKQLLNLIVHSLYTHPEIFLRELISNASDALGKARFRMLSSDEGLDKSGDLKITITVDKESGSFVIEDTGIGMSEEELISNLGTVASSGTLGFMEALKEQQKEGQRLDANLIGQFGVGFYSVFMVTDEVTVETKSIESGLQGWRWKSSGQGSYTIEPVEREARGTRISFILKEEFREFAQEYRVEQIIKKYSNFVEYPIYIGSRQINSMTALWQRPKSELKQEEVNEFYKFIANDFKDPLDYLHVSVEGAVSFKALLFIPSEAPMELLYNQGALEKRGPQLYVKKVLIQHECRDLLPEYLRFVSGVVDTEDLPLNVSRELVQASPVMAKIKQILTTKLLGWFDTIAKEEPEKFRAFYKAFGTILKIGLNTDFTNRDKLIDLLRFETTKTVEGEYVTLKEYVGRMAEGQTEIYYHSGSSRAQMLAHPNLEYFRKRDIEVLLLSDPVDVFVIPSIFEYDKKPLKSIEKAEIDMSTVEPEGERLSAEGTVGVISLFKEVLGERVADVVESRRLVSSPVTLVSGKDALDSQFEKMMKMMNKDADMPSTKKILEINTAHPIIRNLAGKHAVGLSTDPVVRAAVTQLFESALLLEGDLESVADYVSRMNELVEAATRS</sequence>
<reference key="1">
    <citation type="journal article" date="2002" name="Proc. Natl. Acad. Sci. U.S.A.">
        <title>The complete genome sequence of Chlorobium tepidum TLS, a photosynthetic, anaerobic, green-sulfur bacterium.</title>
        <authorList>
            <person name="Eisen J.A."/>
            <person name="Nelson K.E."/>
            <person name="Paulsen I.T."/>
            <person name="Heidelberg J.F."/>
            <person name="Wu M."/>
            <person name="Dodson R.J."/>
            <person name="DeBoy R.T."/>
            <person name="Gwinn M.L."/>
            <person name="Nelson W.C."/>
            <person name="Haft D.H."/>
            <person name="Hickey E.K."/>
            <person name="Peterson J.D."/>
            <person name="Durkin A.S."/>
            <person name="Kolonay J.F."/>
            <person name="Yang F."/>
            <person name="Holt I.E."/>
            <person name="Umayam L.A."/>
            <person name="Mason T.M."/>
            <person name="Brenner M."/>
            <person name="Shea T.P."/>
            <person name="Parksey D.S."/>
            <person name="Nierman W.C."/>
            <person name="Feldblyum T.V."/>
            <person name="Hansen C.L."/>
            <person name="Craven M.B."/>
            <person name="Radune D."/>
            <person name="Vamathevan J.J."/>
            <person name="Khouri H.M."/>
            <person name="White O."/>
            <person name="Gruber T.M."/>
            <person name="Ketchum K.A."/>
            <person name="Venter J.C."/>
            <person name="Tettelin H."/>
            <person name="Bryant D.A."/>
            <person name="Fraser C.M."/>
        </authorList>
    </citation>
    <scope>NUCLEOTIDE SEQUENCE [LARGE SCALE GENOMIC DNA]</scope>
    <source>
        <strain>ATCC 49652 / DSM 12025 / NBRC 103806 / TLS</strain>
    </source>
</reference>
<name>HTPG_CHLTE</name>
<proteinExistence type="inferred from homology"/>
<protein>
    <recommendedName>
        <fullName evidence="1">Chaperone protein HtpG</fullName>
    </recommendedName>
    <alternativeName>
        <fullName evidence="1">Heat shock protein HtpG</fullName>
    </alternativeName>
    <alternativeName>
        <fullName evidence="1">High temperature protein G</fullName>
    </alternativeName>
</protein>
<comment type="function">
    <text evidence="1">Molecular chaperone. Has ATPase activity.</text>
</comment>
<comment type="subunit">
    <text evidence="1">Homodimer.</text>
</comment>
<comment type="subcellular location">
    <subcellularLocation>
        <location evidence="1">Cytoplasm</location>
    </subcellularLocation>
</comment>
<comment type="similarity">
    <text evidence="1">Belongs to the heat shock protein 90 family.</text>
</comment>
<accession>Q8KE61</accession>
<gene>
    <name evidence="1" type="primary">htpG</name>
    <name type="ordered locus">CT0829</name>
</gene>
<dbReference type="EMBL" id="AE006470">
    <property type="protein sequence ID" value="AAM72065.1"/>
    <property type="molecule type" value="Genomic_DNA"/>
</dbReference>
<dbReference type="RefSeq" id="NP_661723.1">
    <property type="nucleotide sequence ID" value="NC_002932.3"/>
</dbReference>
<dbReference type="RefSeq" id="WP_010932510.1">
    <property type="nucleotide sequence ID" value="NC_002932.3"/>
</dbReference>
<dbReference type="SMR" id="Q8KE61"/>
<dbReference type="STRING" id="194439.CT0829"/>
<dbReference type="EnsemblBacteria" id="AAM72065">
    <property type="protein sequence ID" value="AAM72065"/>
    <property type="gene ID" value="CT0829"/>
</dbReference>
<dbReference type="KEGG" id="cte:CT0829"/>
<dbReference type="PATRIC" id="fig|194439.7.peg.753"/>
<dbReference type="eggNOG" id="COG0326">
    <property type="taxonomic scope" value="Bacteria"/>
</dbReference>
<dbReference type="HOGENOM" id="CLU_006684_3_0_10"/>
<dbReference type="OrthoDB" id="9802640at2"/>
<dbReference type="Proteomes" id="UP000001007">
    <property type="component" value="Chromosome"/>
</dbReference>
<dbReference type="GO" id="GO:0005737">
    <property type="term" value="C:cytoplasm"/>
    <property type="evidence" value="ECO:0007669"/>
    <property type="project" value="UniProtKB-SubCell"/>
</dbReference>
<dbReference type="GO" id="GO:0005524">
    <property type="term" value="F:ATP binding"/>
    <property type="evidence" value="ECO:0007669"/>
    <property type="project" value="UniProtKB-UniRule"/>
</dbReference>
<dbReference type="GO" id="GO:0016887">
    <property type="term" value="F:ATP hydrolysis activity"/>
    <property type="evidence" value="ECO:0007669"/>
    <property type="project" value="InterPro"/>
</dbReference>
<dbReference type="GO" id="GO:0140662">
    <property type="term" value="F:ATP-dependent protein folding chaperone"/>
    <property type="evidence" value="ECO:0007669"/>
    <property type="project" value="InterPro"/>
</dbReference>
<dbReference type="GO" id="GO:0051082">
    <property type="term" value="F:unfolded protein binding"/>
    <property type="evidence" value="ECO:0007669"/>
    <property type="project" value="UniProtKB-UniRule"/>
</dbReference>
<dbReference type="CDD" id="cd16927">
    <property type="entry name" value="HATPase_Hsp90-like"/>
    <property type="match status" value="1"/>
</dbReference>
<dbReference type="FunFam" id="3.30.565.10:FF:000009">
    <property type="entry name" value="Molecular chaperone HtpG"/>
    <property type="match status" value="1"/>
</dbReference>
<dbReference type="Gene3D" id="3.30.230.80">
    <property type="match status" value="1"/>
</dbReference>
<dbReference type="Gene3D" id="3.40.50.11260">
    <property type="match status" value="1"/>
</dbReference>
<dbReference type="Gene3D" id="1.20.120.790">
    <property type="entry name" value="Heat shock protein 90, C-terminal domain"/>
    <property type="match status" value="1"/>
</dbReference>
<dbReference type="Gene3D" id="3.30.565.10">
    <property type="entry name" value="Histidine kinase-like ATPase, C-terminal domain"/>
    <property type="match status" value="1"/>
</dbReference>
<dbReference type="HAMAP" id="MF_00505">
    <property type="entry name" value="HSP90"/>
    <property type="match status" value="1"/>
</dbReference>
<dbReference type="InterPro" id="IPR036890">
    <property type="entry name" value="HATPase_C_sf"/>
</dbReference>
<dbReference type="InterPro" id="IPR037196">
    <property type="entry name" value="HSP90_C"/>
</dbReference>
<dbReference type="InterPro" id="IPR001404">
    <property type="entry name" value="Hsp90_fam"/>
</dbReference>
<dbReference type="InterPro" id="IPR020575">
    <property type="entry name" value="Hsp90_N"/>
</dbReference>
<dbReference type="InterPro" id="IPR020568">
    <property type="entry name" value="Ribosomal_Su5_D2-typ_SF"/>
</dbReference>
<dbReference type="NCBIfam" id="NF003555">
    <property type="entry name" value="PRK05218.1"/>
    <property type="match status" value="1"/>
</dbReference>
<dbReference type="PANTHER" id="PTHR11528">
    <property type="entry name" value="HEAT SHOCK PROTEIN 90 FAMILY MEMBER"/>
    <property type="match status" value="1"/>
</dbReference>
<dbReference type="Pfam" id="PF13589">
    <property type="entry name" value="HATPase_c_3"/>
    <property type="match status" value="1"/>
</dbReference>
<dbReference type="Pfam" id="PF00183">
    <property type="entry name" value="HSP90"/>
    <property type="match status" value="1"/>
</dbReference>
<dbReference type="PIRSF" id="PIRSF002583">
    <property type="entry name" value="Hsp90"/>
    <property type="match status" value="1"/>
</dbReference>
<dbReference type="PRINTS" id="PR00775">
    <property type="entry name" value="HEATSHOCK90"/>
</dbReference>
<dbReference type="SMART" id="SM00387">
    <property type="entry name" value="HATPase_c"/>
    <property type="match status" value="1"/>
</dbReference>
<dbReference type="SUPFAM" id="SSF55874">
    <property type="entry name" value="ATPase domain of HSP90 chaperone/DNA topoisomerase II/histidine kinase"/>
    <property type="match status" value="1"/>
</dbReference>
<dbReference type="SUPFAM" id="SSF110942">
    <property type="entry name" value="HSP90 C-terminal domain"/>
    <property type="match status" value="1"/>
</dbReference>
<dbReference type="SUPFAM" id="SSF54211">
    <property type="entry name" value="Ribosomal protein S5 domain 2-like"/>
    <property type="match status" value="1"/>
</dbReference>
<evidence type="ECO:0000255" key="1">
    <source>
        <dbReference type="HAMAP-Rule" id="MF_00505"/>
    </source>
</evidence>
<keyword id="KW-0067">ATP-binding</keyword>
<keyword id="KW-0143">Chaperone</keyword>
<keyword id="KW-0963">Cytoplasm</keyword>
<keyword id="KW-0547">Nucleotide-binding</keyword>
<keyword id="KW-1185">Reference proteome</keyword>
<keyword id="KW-0346">Stress response</keyword>
<feature type="chain" id="PRO_0000062979" description="Chaperone protein HtpG">
    <location>
        <begin position="1"/>
        <end position="629"/>
    </location>
</feature>
<feature type="region of interest" description="A; substrate-binding" evidence="1">
    <location>
        <begin position="1"/>
        <end position="335"/>
    </location>
</feature>
<feature type="region of interest" description="B" evidence="1">
    <location>
        <begin position="336"/>
        <end position="547"/>
    </location>
</feature>
<feature type="region of interest" description="C" evidence="1">
    <location>
        <begin position="548"/>
        <end position="629"/>
    </location>
</feature>